<comment type="function">
    <text>Together with an NADPH cytochrome P450 the enzyme system catalyzes the terminal hydroxylation as the first step in the assimilation of alkanes and fatty acids.</text>
</comment>
<comment type="cofactor">
    <cofactor evidence="1">
        <name>heme</name>
        <dbReference type="ChEBI" id="CHEBI:30413"/>
    </cofactor>
</comment>
<comment type="subcellular location">
    <subcellularLocation>
        <location>Endoplasmic reticulum membrane</location>
        <topology>Single-pass membrane protein</topology>
    </subcellularLocation>
</comment>
<comment type="induction">
    <text>By various alkanes.</text>
</comment>
<comment type="similarity">
    <text evidence="2">Belongs to the cytochrome P450 family.</text>
</comment>
<organism>
    <name type="scientific">Candida tropicalis</name>
    <name type="common">Yeast</name>
    <dbReference type="NCBI Taxonomy" id="5482"/>
    <lineage>
        <taxon>Eukaryota</taxon>
        <taxon>Fungi</taxon>
        <taxon>Dikarya</taxon>
        <taxon>Ascomycota</taxon>
        <taxon>Saccharomycotina</taxon>
        <taxon>Pichiomycetes</taxon>
        <taxon>Debaryomycetaceae</taxon>
        <taxon>Candida/Lodderomyces clade</taxon>
        <taxon>Candida</taxon>
    </lineage>
</organism>
<proteinExistence type="evidence at protein level"/>
<dbReference type="EC" id="1.14.14.-"/>
<dbReference type="EMBL" id="M24894">
    <property type="protein sequence ID" value="AAA63568.1"/>
    <property type="molecule type" value="Genomic_DNA"/>
</dbReference>
<dbReference type="EMBL" id="M63258">
    <property type="protein sequence ID" value="AAA34354.1"/>
    <property type="molecule type" value="Genomic_DNA"/>
</dbReference>
<dbReference type="EMBL" id="M15945">
    <property type="protein sequence ID" value="AAA34334.1"/>
    <property type="molecule type" value="Genomic_DNA"/>
</dbReference>
<dbReference type="PIR" id="JS0203">
    <property type="entry name" value="JS0203"/>
</dbReference>
<dbReference type="SMR" id="P10615"/>
<dbReference type="VEuPathDB" id="FungiDB:CTMYA2_042610"/>
<dbReference type="VEuPathDB" id="FungiDB:CTRG_01060"/>
<dbReference type="GO" id="GO:0005789">
    <property type="term" value="C:endoplasmic reticulum membrane"/>
    <property type="evidence" value="ECO:0007669"/>
    <property type="project" value="UniProtKB-SubCell"/>
</dbReference>
<dbReference type="GO" id="GO:0020037">
    <property type="term" value="F:heme binding"/>
    <property type="evidence" value="ECO:0007669"/>
    <property type="project" value="InterPro"/>
</dbReference>
<dbReference type="GO" id="GO:0005506">
    <property type="term" value="F:iron ion binding"/>
    <property type="evidence" value="ECO:0007669"/>
    <property type="project" value="InterPro"/>
</dbReference>
<dbReference type="GO" id="GO:0016712">
    <property type="term" value="F:oxidoreductase activity, acting on paired donors, with incorporation or reduction of molecular oxygen, reduced flavin or flavoprotein as one donor, and incorporation of one atom of oxygen"/>
    <property type="evidence" value="ECO:0007669"/>
    <property type="project" value="InterPro"/>
</dbReference>
<dbReference type="CDD" id="cd11063">
    <property type="entry name" value="CYP52"/>
    <property type="match status" value="1"/>
</dbReference>
<dbReference type="Gene3D" id="1.10.630.10">
    <property type="entry name" value="Cytochrome P450"/>
    <property type="match status" value="1"/>
</dbReference>
<dbReference type="InterPro" id="IPR001128">
    <property type="entry name" value="Cyt_P450"/>
</dbReference>
<dbReference type="InterPro" id="IPR017972">
    <property type="entry name" value="Cyt_P450_CS"/>
</dbReference>
<dbReference type="InterPro" id="IPR002974">
    <property type="entry name" value="Cyt_P450_E_CYP52_ascomycetes"/>
</dbReference>
<dbReference type="InterPro" id="IPR047146">
    <property type="entry name" value="Cyt_P450_E_CYP52_fungi"/>
</dbReference>
<dbReference type="InterPro" id="IPR002402">
    <property type="entry name" value="Cyt_P450_E_grp-II"/>
</dbReference>
<dbReference type="InterPro" id="IPR036396">
    <property type="entry name" value="Cyt_P450_sf"/>
</dbReference>
<dbReference type="PANTHER" id="PTHR24287">
    <property type="entry name" value="P450, PUTATIVE (EUROFUNG)-RELATED"/>
    <property type="match status" value="1"/>
</dbReference>
<dbReference type="PANTHER" id="PTHR24287:SF1">
    <property type="entry name" value="P450, PUTATIVE (EUROFUNG)-RELATED"/>
    <property type="match status" value="1"/>
</dbReference>
<dbReference type="Pfam" id="PF00067">
    <property type="entry name" value="p450"/>
    <property type="match status" value="1"/>
</dbReference>
<dbReference type="PRINTS" id="PR00464">
    <property type="entry name" value="EP450II"/>
</dbReference>
<dbReference type="PRINTS" id="PR01239">
    <property type="entry name" value="EP450IICYP52"/>
</dbReference>
<dbReference type="PRINTS" id="PR00385">
    <property type="entry name" value="P450"/>
</dbReference>
<dbReference type="SUPFAM" id="SSF48264">
    <property type="entry name" value="Cytochrome P450"/>
    <property type="match status" value="1"/>
</dbReference>
<dbReference type="PROSITE" id="PS00086">
    <property type="entry name" value="CYTOCHROME_P450"/>
    <property type="match status" value="1"/>
</dbReference>
<keyword id="KW-0256">Endoplasmic reticulum</keyword>
<keyword id="KW-0349">Heme</keyword>
<keyword id="KW-0408">Iron</keyword>
<keyword id="KW-0472">Membrane</keyword>
<keyword id="KW-0479">Metal-binding</keyword>
<keyword id="KW-0503">Monooxygenase</keyword>
<keyword id="KW-0560">Oxidoreductase</keyword>
<keyword id="KW-0812">Transmembrane</keyword>
<keyword id="KW-1133">Transmembrane helix</keyword>
<sequence length="543" mass="62499">MSSSPSIAQEFLATITPYVEYCQENYTKWYYFIPLVILSLNLISMLHTKYLERKFKAKPLAVYVQDYTFCLITPLVLIYYKSKGTVMQFACDLWDKNLIVSDPKAKTIGLKILGIPLIETKDPENVKAILATQFNDFSLGTRHDFLYSLLGDGIFTLDGAGWKHSRTMLRPQFAREQVSHVKLLEPHMQVLFKHIRKHHGQTFDIQELFFRLTVDSATEFLLGESAESLRDESVGLTPTTKDFDGRNEFADAFNYSQTNQAYRFLLQQMYWILNGSEFRKSIAIVHKFADHYVQKALELTDEDLEKKEGYVFLFELAKQTRDPKVLRDQLLNILVAGRDTTAGLLSFLFFELSRNPEIFAKLREEIENKFGLGQDARVEEISFETLKSCEYLKAVINETLRIYPSVPHNFRVATRNTTLPRGGGEGGLSPIAIKKGQVVMYTILATHRDKDIYGEDAYVFRPERWFEPETRKLGWAYVPFNGGPRICLGQQFALTEASYVTVRLLQEFGNLKQDPNTEYPPKLQNTLTLSLFEGAEVQMYLIL</sequence>
<name>CP52A_CANTR</name>
<accession>P10615</accession>
<feature type="chain" id="PRO_0000052019" description="Cytochrome P450 52A1">
    <location>
        <begin position="1"/>
        <end position="543"/>
    </location>
</feature>
<feature type="topological domain" description="Lumenal" evidence="3">
    <location>
        <begin position="1"/>
        <end position="28"/>
    </location>
</feature>
<feature type="transmembrane region" description="Helical" evidence="2">
    <location>
        <begin position="29"/>
        <end position="48"/>
    </location>
</feature>
<feature type="topological domain" description="Cytoplasmic" evidence="3">
    <location>
        <begin position="49"/>
        <end position="543"/>
    </location>
</feature>
<feature type="binding site" description="axial binding residue" evidence="1">
    <location>
        <position position="487"/>
    </location>
    <ligand>
        <name>heme</name>
        <dbReference type="ChEBI" id="CHEBI:30413"/>
    </ligand>
    <ligandPart>
        <name>Fe</name>
        <dbReference type="ChEBI" id="CHEBI:18248"/>
    </ligandPart>
</feature>
<feature type="sequence conflict" description="In Ref. 2; AAA34354." evidence="2" ref="2">
    <original>C</original>
    <variation>G</variation>
    <location>
        <position position="70"/>
    </location>
</feature>
<gene>
    <name type="primary">CYP52A1</name>
</gene>
<protein>
    <recommendedName>
        <fullName>Cytochrome P450 52A1</fullName>
        <ecNumber>1.14.14.-</ecNumber>
    </recommendedName>
    <alternativeName>
        <fullName>Alkane-inducible P450-ALK1</fullName>
    </alternativeName>
    <alternativeName>
        <fullName>CYPLIIA1</fullName>
    </alternativeName>
</protein>
<reference key="1">
    <citation type="journal article" date="1989" name="Gene">
        <title>Characterization of the alkane-inducible cytochrome P450 (P450alk) gene from the yeast Candida tropicalis: identification of a new P450 gene family.</title>
        <authorList>
            <person name="Sanglard D."/>
            <person name="Loper J.C."/>
        </authorList>
    </citation>
    <scope>NUCLEOTIDE SEQUENCE [GENOMIC DNA]</scope>
    <source>
        <strain>ATCC 750 / CBS 94 / DSM 11953 / JCM 1541 / NBRC 1400</strain>
    </source>
</reference>
<reference key="2">
    <citation type="journal article" date="1991" name="Gene">
        <title>Characterization of a second alkane-inducible cytochrome P450-encoding gene, CYP52A2, from Candida tropicalis.</title>
        <authorList>
            <person name="Seghezzi W."/>
            <person name="Sanglard D."/>
            <person name="Fiechter A."/>
        </authorList>
    </citation>
    <scope>NUCLEOTIDE SEQUENCE [GENOMIC DNA]</scope>
    <source>
        <strain>ATCC 750 / CBS 94 / DSM 11953 / JCM 1541 / NBRC 1400</strain>
    </source>
</reference>
<reference key="3">
    <citation type="journal article" date="1987" name="Biochem. Biophys. Res. Commun.">
        <title>Isolation of the alkane inducible cytochrome P450 (P450alk) gene from the yeast Candida tropicalis.</title>
        <authorList>
            <person name="Sanglard D."/>
            <person name="Chen C."/>
            <person name="Loper J.C."/>
        </authorList>
    </citation>
    <scope>NUCLEOTIDE SEQUENCE [GENOMIC DNA] OF 438-543</scope>
    <source>
        <strain>ATCC 750 / CBS 94 / DSM 11953 / JCM 1541 / NBRC 1400</strain>
    </source>
</reference>
<reference key="4">
    <citation type="journal article" date="1993" name="Eur. J. Biochem.">
        <title>Probing the membrane topology of Candida tropicalis cytochrome P450.</title>
        <authorList>
            <person name="Sanglard D."/>
            <person name="Sengstag C."/>
            <person name="Seghezzi W."/>
        </authorList>
    </citation>
    <scope>TOPOLOGY</scope>
</reference>
<evidence type="ECO:0000250" key="1"/>
<evidence type="ECO:0000305" key="2"/>
<evidence type="ECO:0000305" key="3">
    <source>
    </source>
</evidence>